<keyword id="KW-0687">Ribonucleoprotein</keyword>
<keyword id="KW-0689">Ribosomal protein</keyword>
<keyword id="KW-0694">RNA-binding</keyword>
<keyword id="KW-0699">rRNA-binding</keyword>
<organism>
    <name type="scientific">Pyrobaculum neutrophilum (strain DSM 2338 / JCM 9278 / NBRC 100436 / V24Sta)</name>
    <name type="common">Thermoproteus neutrophilus</name>
    <dbReference type="NCBI Taxonomy" id="444157"/>
    <lineage>
        <taxon>Archaea</taxon>
        <taxon>Thermoproteota</taxon>
        <taxon>Thermoprotei</taxon>
        <taxon>Thermoproteales</taxon>
        <taxon>Thermoproteaceae</taxon>
        <taxon>Pyrobaculum</taxon>
    </lineage>
</organism>
<evidence type="ECO:0000255" key="1">
    <source>
        <dbReference type="HAMAP-Rule" id="MF_01341"/>
    </source>
</evidence>
<evidence type="ECO:0000256" key="2">
    <source>
        <dbReference type="SAM" id="MobiDB-lite"/>
    </source>
</evidence>
<evidence type="ECO:0000305" key="3"/>
<reference key="1">
    <citation type="submission" date="2008-03" db="EMBL/GenBank/DDBJ databases">
        <title>Complete sequence of Thermoproteus neutrophilus V24Sta.</title>
        <authorList>
            <consortium name="US DOE Joint Genome Institute"/>
            <person name="Copeland A."/>
            <person name="Lucas S."/>
            <person name="Lapidus A."/>
            <person name="Glavina del Rio T."/>
            <person name="Dalin E."/>
            <person name="Tice H."/>
            <person name="Bruce D."/>
            <person name="Goodwin L."/>
            <person name="Pitluck S."/>
            <person name="Sims D."/>
            <person name="Brettin T."/>
            <person name="Detter J.C."/>
            <person name="Han C."/>
            <person name="Kuske C.R."/>
            <person name="Schmutz J."/>
            <person name="Larimer F."/>
            <person name="Land M."/>
            <person name="Hauser L."/>
            <person name="Kyrpides N."/>
            <person name="Mikhailova N."/>
            <person name="Biddle J.F."/>
            <person name="Zhang Z."/>
            <person name="Fitz-Gibbon S.T."/>
            <person name="Lowe T.M."/>
            <person name="Saltikov C."/>
            <person name="House C.H."/>
            <person name="Richardson P."/>
        </authorList>
    </citation>
    <scope>NUCLEOTIDE SEQUENCE [LARGE SCALE GENOMIC DNA]</scope>
    <source>
        <strain>DSM 2338 / JCM 9278 / NBRC 100436 / V24Sta</strain>
    </source>
</reference>
<accession>B1Y901</accession>
<proteinExistence type="inferred from homology"/>
<feature type="chain" id="PRO_1000142892" description="Large ribosomal subunit protein uL15">
    <location>
        <begin position="1"/>
        <end position="156"/>
    </location>
</feature>
<feature type="region of interest" description="Disordered" evidence="2">
    <location>
        <begin position="1"/>
        <end position="35"/>
    </location>
</feature>
<feature type="compositionally biased region" description="Basic residues" evidence="2">
    <location>
        <begin position="1"/>
        <end position="16"/>
    </location>
</feature>
<sequence length="156" mass="17276">MVRRFKRAVKYRRGSRTHGWGRVGQHRKSGGSGGKGMVGFHKHKWSLVMKYGESGTGWPFYGKHGFKQPQAISIEWRPINVGTLAEVVRGLKREGRVKEEGGRYVVNLVELGFNKLLGGGDVDLPIVVYTPAASRSAVEKIEKAGGEVRIVPAVHR</sequence>
<name>RL15_PYRNV</name>
<gene>
    <name evidence="1" type="primary">rpl15</name>
    <name type="ordered locus">Tneu_1303</name>
</gene>
<protein>
    <recommendedName>
        <fullName evidence="1">Large ribosomal subunit protein uL15</fullName>
    </recommendedName>
    <alternativeName>
        <fullName evidence="3">50S ribosomal protein L15</fullName>
    </alternativeName>
</protein>
<comment type="function">
    <text evidence="1">Binds to the 23S rRNA.</text>
</comment>
<comment type="subunit">
    <text evidence="1">Part of the 50S ribosomal subunit.</text>
</comment>
<comment type="similarity">
    <text evidence="1">Belongs to the universal ribosomal protein uL15 family.</text>
</comment>
<dbReference type="EMBL" id="CP001014">
    <property type="protein sequence ID" value="ACB40230.1"/>
    <property type="molecule type" value="Genomic_DNA"/>
</dbReference>
<dbReference type="RefSeq" id="WP_012350649.1">
    <property type="nucleotide sequence ID" value="NC_010525.1"/>
</dbReference>
<dbReference type="SMR" id="B1Y901"/>
<dbReference type="STRING" id="444157.Tneu_1303"/>
<dbReference type="GeneID" id="6165604"/>
<dbReference type="KEGG" id="tne:Tneu_1303"/>
<dbReference type="eggNOG" id="arCOG00779">
    <property type="taxonomic scope" value="Archaea"/>
</dbReference>
<dbReference type="HOGENOM" id="CLU_109163_0_0_2"/>
<dbReference type="OrthoDB" id="9418at2157"/>
<dbReference type="Proteomes" id="UP000001694">
    <property type="component" value="Chromosome"/>
</dbReference>
<dbReference type="GO" id="GO:0022625">
    <property type="term" value="C:cytosolic large ribosomal subunit"/>
    <property type="evidence" value="ECO:0007669"/>
    <property type="project" value="TreeGrafter"/>
</dbReference>
<dbReference type="GO" id="GO:0019843">
    <property type="term" value="F:rRNA binding"/>
    <property type="evidence" value="ECO:0007669"/>
    <property type="project" value="UniProtKB-UniRule"/>
</dbReference>
<dbReference type="GO" id="GO:0003735">
    <property type="term" value="F:structural constituent of ribosome"/>
    <property type="evidence" value="ECO:0007669"/>
    <property type="project" value="InterPro"/>
</dbReference>
<dbReference type="GO" id="GO:0006412">
    <property type="term" value="P:translation"/>
    <property type="evidence" value="ECO:0007669"/>
    <property type="project" value="UniProtKB-UniRule"/>
</dbReference>
<dbReference type="FunFam" id="4.10.990.10:FF:000001">
    <property type="entry name" value="50S ribosomal protein L15"/>
    <property type="match status" value="1"/>
</dbReference>
<dbReference type="Gene3D" id="3.100.10.10">
    <property type="match status" value="1"/>
</dbReference>
<dbReference type="Gene3D" id="4.10.990.10">
    <property type="match status" value="1"/>
</dbReference>
<dbReference type="HAMAP" id="MF_01341">
    <property type="entry name" value="Ribosomal_uL15"/>
    <property type="match status" value="1"/>
</dbReference>
<dbReference type="InterPro" id="IPR027386">
    <property type="entry name" value="Rbsml_uL15_N"/>
</dbReference>
<dbReference type="InterPro" id="IPR030878">
    <property type="entry name" value="Ribosomal_uL15"/>
</dbReference>
<dbReference type="InterPro" id="IPR021131">
    <property type="entry name" value="Ribosomal_uL15/eL18"/>
</dbReference>
<dbReference type="InterPro" id="IPR036227">
    <property type="entry name" value="Ribosomal_uL15/eL18_sf"/>
</dbReference>
<dbReference type="InterPro" id="IPR001196">
    <property type="entry name" value="Ribosomal_uL15_CS"/>
</dbReference>
<dbReference type="PANTHER" id="PTHR11721">
    <property type="entry name" value="60S RIBOSOMAL PROTEIN L27A"/>
    <property type="match status" value="1"/>
</dbReference>
<dbReference type="PANTHER" id="PTHR11721:SF3">
    <property type="entry name" value="LARGE RIBOSOMAL SUBUNIT PROTEIN UL15"/>
    <property type="match status" value="1"/>
</dbReference>
<dbReference type="Pfam" id="PF00828">
    <property type="entry name" value="Ribosomal_L27A"/>
    <property type="match status" value="1"/>
</dbReference>
<dbReference type="SUPFAM" id="SSF52080">
    <property type="entry name" value="Ribosomal proteins L15p and L18e"/>
    <property type="match status" value="1"/>
</dbReference>
<dbReference type="PROSITE" id="PS00475">
    <property type="entry name" value="RIBOSOMAL_L15"/>
    <property type="match status" value="1"/>
</dbReference>